<name>SYT_CORJK</name>
<feature type="chain" id="PRO_1000098564" description="Threonine--tRNA ligase">
    <location>
        <begin position="1"/>
        <end position="691"/>
    </location>
</feature>
<feature type="domain" description="TGS" evidence="2">
    <location>
        <begin position="1"/>
        <end position="69"/>
    </location>
</feature>
<feature type="region of interest" description="Catalytic" evidence="1">
    <location>
        <begin position="268"/>
        <end position="574"/>
    </location>
</feature>
<feature type="binding site" evidence="1">
    <location>
        <position position="373"/>
    </location>
    <ligand>
        <name>Zn(2+)</name>
        <dbReference type="ChEBI" id="CHEBI:29105"/>
    </ligand>
</feature>
<feature type="binding site" evidence="1">
    <location>
        <position position="424"/>
    </location>
    <ligand>
        <name>Zn(2+)</name>
        <dbReference type="ChEBI" id="CHEBI:29105"/>
    </ligand>
</feature>
<feature type="binding site" evidence="1">
    <location>
        <position position="551"/>
    </location>
    <ligand>
        <name>Zn(2+)</name>
        <dbReference type="ChEBI" id="CHEBI:29105"/>
    </ligand>
</feature>
<comment type="function">
    <text evidence="1">Catalyzes the attachment of threonine to tRNA(Thr) in a two-step reaction: L-threonine is first activated by ATP to form Thr-AMP and then transferred to the acceptor end of tRNA(Thr). Also edits incorrectly charged L-seryl-tRNA(Thr).</text>
</comment>
<comment type="catalytic activity">
    <reaction evidence="1">
        <text>tRNA(Thr) + L-threonine + ATP = L-threonyl-tRNA(Thr) + AMP + diphosphate + H(+)</text>
        <dbReference type="Rhea" id="RHEA:24624"/>
        <dbReference type="Rhea" id="RHEA-COMP:9670"/>
        <dbReference type="Rhea" id="RHEA-COMP:9704"/>
        <dbReference type="ChEBI" id="CHEBI:15378"/>
        <dbReference type="ChEBI" id="CHEBI:30616"/>
        <dbReference type="ChEBI" id="CHEBI:33019"/>
        <dbReference type="ChEBI" id="CHEBI:57926"/>
        <dbReference type="ChEBI" id="CHEBI:78442"/>
        <dbReference type="ChEBI" id="CHEBI:78534"/>
        <dbReference type="ChEBI" id="CHEBI:456215"/>
        <dbReference type="EC" id="6.1.1.3"/>
    </reaction>
</comment>
<comment type="cofactor">
    <cofactor evidence="1">
        <name>Zn(2+)</name>
        <dbReference type="ChEBI" id="CHEBI:29105"/>
    </cofactor>
    <text evidence="1">Binds 1 zinc ion per subunit.</text>
</comment>
<comment type="subunit">
    <text evidence="1">Homodimer.</text>
</comment>
<comment type="subcellular location">
    <subcellularLocation>
        <location evidence="1">Cytoplasm</location>
    </subcellularLocation>
</comment>
<comment type="similarity">
    <text evidence="1">Belongs to the class-II aminoacyl-tRNA synthetase family.</text>
</comment>
<accession>Q4JVC7</accession>
<reference key="1">
    <citation type="journal article" date="2005" name="J. Bacteriol.">
        <title>Complete genome sequence and analysis of the multiresistant nosocomial pathogen Corynebacterium jeikeium K411, a lipid-requiring bacterium of the human skin flora.</title>
        <authorList>
            <person name="Tauch A."/>
            <person name="Kaiser O."/>
            <person name="Hain T."/>
            <person name="Goesmann A."/>
            <person name="Weisshaar B."/>
            <person name="Albersmeier A."/>
            <person name="Bekel T."/>
            <person name="Bischoff N."/>
            <person name="Brune I."/>
            <person name="Chakraborty T."/>
            <person name="Kalinowski J."/>
            <person name="Meyer F."/>
            <person name="Rupp O."/>
            <person name="Schneiker S."/>
            <person name="Viehoever P."/>
            <person name="Puehler A."/>
        </authorList>
    </citation>
    <scope>NUCLEOTIDE SEQUENCE [LARGE SCALE GENOMIC DNA]</scope>
    <source>
        <strain>K411</strain>
    </source>
</reference>
<keyword id="KW-0030">Aminoacyl-tRNA synthetase</keyword>
<keyword id="KW-0067">ATP-binding</keyword>
<keyword id="KW-0963">Cytoplasm</keyword>
<keyword id="KW-0436">Ligase</keyword>
<keyword id="KW-0479">Metal-binding</keyword>
<keyword id="KW-0547">Nucleotide-binding</keyword>
<keyword id="KW-0648">Protein biosynthesis</keyword>
<keyword id="KW-1185">Reference proteome</keyword>
<keyword id="KW-0694">RNA-binding</keyword>
<keyword id="KW-0820">tRNA-binding</keyword>
<keyword id="KW-0862">Zinc</keyword>
<protein>
    <recommendedName>
        <fullName evidence="1">Threonine--tRNA ligase</fullName>
        <ecNumber evidence="1">6.1.1.3</ecNumber>
    </recommendedName>
    <alternativeName>
        <fullName evidence="1">Threonyl-tRNA synthetase</fullName>
        <shortName evidence="1">ThrRS</shortName>
    </alternativeName>
</protein>
<evidence type="ECO:0000255" key="1">
    <source>
        <dbReference type="HAMAP-Rule" id="MF_00184"/>
    </source>
</evidence>
<evidence type="ECO:0000255" key="2">
    <source>
        <dbReference type="PROSITE-ProRule" id="PRU01228"/>
    </source>
</evidence>
<organism>
    <name type="scientific">Corynebacterium jeikeium (strain K411)</name>
    <dbReference type="NCBI Taxonomy" id="306537"/>
    <lineage>
        <taxon>Bacteria</taxon>
        <taxon>Bacillati</taxon>
        <taxon>Actinomycetota</taxon>
        <taxon>Actinomycetes</taxon>
        <taxon>Mycobacteriales</taxon>
        <taxon>Corynebacteriaceae</taxon>
        <taxon>Corynebacterium</taxon>
    </lineage>
</organism>
<sequence length="691" mass="77372">MSTPEITPAAVTFRVPAGTPAGAAMRELGLPNKGPEAIVCVKETEGESAGQLRDLSWVPQQDVEVAAVPANTDEGRGVIRHSCAHVLAQAVQKEFPGTKLGIGPAIDNGFYYDFQVAEPFTPEDLNKLEKTMKKIIKSGQKFERKAYDDVEQARAEYADEPFKTELIADKGNVDPDSDEATEVGAGELTAYSNVNPRTGEVEWYDLCRGPHVPTTRYIPAFALTRSSAAYWRGDQSKAGLQRIYGTAWESKEALAEYQTMMAEAEKRDHRRLGQELDLFSFPDEIGSGFPVFHPDGGIVRLEMEEHSRKRHIASGYSFVNTPHVTKGDLFQKSGHLDFYADGMFPPMQLDGETDDEGNVTKPAQDYYAKPMNCPMHNLIFASRGRSYRELPLRLFEFGTVYRYEKSGVIHGLTRARGFTQDDAHIYCTEDQLEQELTTVLEFIISLLRDYGLDDFYLELSTKDPNKFVGSDEIWERSTEILERVATKSGLELVPDPAGAAFYGPKISVQARDAIGRTWQMSTVQLDFNLPERFNLEYTAPDGSKQRPIMIHRALFGSIERFFGVLLEHYAGAFPAWLAPHQVVGIPVADEFNEYLENFAADLRAQGIRAEVDTSDDRMQKKIRNHTTGKVPFMLLVGGRDVEANAVSFRFLDGTQVNGVPREDALRIISNWIAERRNDQPSSELIQPLVEV</sequence>
<gene>
    <name evidence="1" type="primary">thrS</name>
    <name type="ordered locus">jk1066</name>
</gene>
<dbReference type="EC" id="6.1.1.3" evidence="1"/>
<dbReference type="EMBL" id="CR931997">
    <property type="protein sequence ID" value="CAI37230.1"/>
    <property type="molecule type" value="Genomic_DNA"/>
</dbReference>
<dbReference type="SMR" id="Q4JVC7"/>
<dbReference type="STRING" id="306537.jk1066"/>
<dbReference type="KEGG" id="cjk:jk1066"/>
<dbReference type="PATRIC" id="fig|306537.10.peg.1078"/>
<dbReference type="eggNOG" id="COG0441">
    <property type="taxonomic scope" value="Bacteria"/>
</dbReference>
<dbReference type="HOGENOM" id="CLU_008554_0_1_11"/>
<dbReference type="OrthoDB" id="9802304at2"/>
<dbReference type="Proteomes" id="UP000000545">
    <property type="component" value="Chromosome"/>
</dbReference>
<dbReference type="GO" id="GO:0005737">
    <property type="term" value="C:cytoplasm"/>
    <property type="evidence" value="ECO:0007669"/>
    <property type="project" value="UniProtKB-SubCell"/>
</dbReference>
<dbReference type="GO" id="GO:0005524">
    <property type="term" value="F:ATP binding"/>
    <property type="evidence" value="ECO:0007669"/>
    <property type="project" value="UniProtKB-UniRule"/>
</dbReference>
<dbReference type="GO" id="GO:0046872">
    <property type="term" value="F:metal ion binding"/>
    <property type="evidence" value="ECO:0007669"/>
    <property type="project" value="UniProtKB-KW"/>
</dbReference>
<dbReference type="GO" id="GO:0004829">
    <property type="term" value="F:threonine-tRNA ligase activity"/>
    <property type="evidence" value="ECO:0007669"/>
    <property type="project" value="UniProtKB-UniRule"/>
</dbReference>
<dbReference type="GO" id="GO:0000049">
    <property type="term" value="F:tRNA binding"/>
    <property type="evidence" value="ECO:0007669"/>
    <property type="project" value="UniProtKB-KW"/>
</dbReference>
<dbReference type="GO" id="GO:0006435">
    <property type="term" value="P:threonyl-tRNA aminoacylation"/>
    <property type="evidence" value="ECO:0007669"/>
    <property type="project" value="UniProtKB-UniRule"/>
</dbReference>
<dbReference type="CDD" id="cd00860">
    <property type="entry name" value="ThrRS_anticodon"/>
    <property type="match status" value="1"/>
</dbReference>
<dbReference type="CDD" id="cd00771">
    <property type="entry name" value="ThrRS_core"/>
    <property type="match status" value="1"/>
</dbReference>
<dbReference type="FunFam" id="3.30.54.20:FF:000003">
    <property type="entry name" value="Threonine--tRNA ligase"/>
    <property type="match status" value="1"/>
</dbReference>
<dbReference type="FunFam" id="3.30.930.10:FF:000019">
    <property type="entry name" value="Threonine--tRNA ligase"/>
    <property type="match status" value="1"/>
</dbReference>
<dbReference type="FunFam" id="3.40.50.800:FF:000001">
    <property type="entry name" value="Threonine--tRNA ligase"/>
    <property type="match status" value="1"/>
</dbReference>
<dbReference type="FunFam" id="3.30.980.10:FF:000005">
    <property type="entry name" value="Threonyl-tRNA synthetase, mitochondrial"/>
    <property type="match status" value="1"/>
</dbReference>
<dbReference type="Gene3D" id="3.30.54.20">
    <property type="match status" value="1"/>
</dbReference>
<dbReference type="Gene3D" id="3.40.50.800">
    <property type="entry name" value="Anticodon-binding domain"/>
    <property type="match status" value="1"/>
</dbReference>
<dbReference type="Gene3D" id="3.30.930.10">
    <property type="entry name" value="Bira Bifunctional Protein, Domain 2"/>
    <property type="match status" value="1"/>
</dbReference>
<dbReference type="Gene3D" id="3.30.980.10">
    <property type="entry name" value="Threonyl-trna Synthetase, Chain A, domain 2"/>
    <property type="match status" value="1"/>
</dbReference>
<dbReference type="HAMAP" id="MF_00184">
    <property type="entry name" value="Thr_tRNA_synth"/>
    <property type="match status" value="1"/>
</dbReference>
<dbReference type="InterPro" id="IPR002314">
    <property type="entry name" value="aa-tRNA-synt_IIb"/>
</dbReference>
<dbReference type="InterPro" id="IPR006195">
    <property type="entry name" value="aa-tRNA-synth_II"/>
</dbReference>
<dbReference type="InterPro" id="IPR045864">
    <property type="entry name" value="aa-tRNA-synth_II/BPL/LPL"/>
</dbReference>
<dbReference type="InterPro" id="IPR004154">
    <property type="entry name" value="Anticodon-bd"/>
</dbReference>
<dbReference type="InterPro" id="IPR036621">
    <property type="entry name" value="Anticodon-bd_dom_sf"/>
</dbReference>
<dbReference type="InterPro" id="IPR004095">
    <property type="entry name" value="TGS"/>
</dbReference>
<dbReference type="InterPro" id="IPR002320">
    <property type="entry name" value="Thr-tRNA-ligase_IIa"/>
</dbReference>
<dbReference type="InterPro" id="IPR018163">
    <property type="entry name" value="Thr/Ala-tRNA-synth_IIc_edit"/>
</dbReference>
<dbReference type="InterPro" id="IPR047246">
    <property type="entry name" value="ThrRS_anticodon"/>
</dbReference>
<dbReference type="InterPro" id="IPR033728">
    <property type="entry name" value="ThrRS_core"/>
</dbReference>
<dbReference type="InterPro" id="IPR012947">
    <property type="entry name" value="tRNA_SAD"/>
</dbReference>
<dbReference type="NCBIfam" id="TIGR00418">
    <property type="entry name" value="thrS"/>
    <property type="match status" value="1"/>
</dbReference>
<dbReference type="PANTHER" id="PTHR11451:SF44">
    <property type="entry name" value="THREONINE--TRNA LIGASE, CHLOROPLASTIC_MITOCHONDRIAL 2"/>
    <property type="match status" value="1"/>
</dbReference>
<dbReference type="PANTHER" id="PTHR11451">
    <property type="entry name" value="THREONINE-TRNA LIGASE"/>
    <property type="match status" value="1"/>
</dbReference>
<dbReference type="Pfam" id="PF03129">
    <property type="entry name" value="HGTP_anticodon"/>
    <property type="match status" value="1"/>
</dbReference>
<dbReference type="Pfam" id="PF00587">
    <property type="entry name" value="tRNA-synt_2b"/>
    <property type="match status" value="1"/>
</dbReference>
<dbReference type="Pfam" id="PF07973">
    <property type="entry name" value="tRNA_SAD"/>
    <property type="match status" value="1"/>
</dbReference>
<dbReference type="PRINTS" id="PR01047">
    <property type="entry name" value="TRNASYNTHTHR"/>
</dbReference>
<dbReference type="SMART" id="SM00863">
    <property type="entry name" value="tRNA_SAD"/>
    <property type="match status" value="1"/>
</dbReference>
<dbReference type="SUPFAM" id="SSF52954">
    <property type="entry name" value="Class II aaRS ABD-related"/>
    <property type="match status" value="1"/>
</dbReference>
<dbReference type="SUPFAM" id="SSF55681">
    <property type="entry name" value="Class II aaRS and biotin synthetases"/>
    <property type="match status" value="1"/>
</dbReference>
<dbReference type="SUPFAM" id="SSF55186">
    <property type="entry name" value="ThrRS/AlaRS common domain"/>
    <property type="match status" value="1"/>
</dbReference>
<dbReference type="PROSITE" id="PS50862">
    <property type="entry name" value="AA_TRNA_LIGASE_II"/>
    <property type="match status" value="1"/>
</dbReference>
<dbReference type="PROSITE" id="PS51880">
    <property type="entry name" value="TGS"/>
    <property type="match status" value="1"/>
</dbReference>
<proteinExistence type="inferred from homology"/>